<proteinExistence type="inferred from homology"/>
<dbReference type="EMBL" id="KC538866">
    <property type="protein sequence ID" value="AGK88382.1"/>
    <property type="molecule type" value="mRNA"/>
</dbReference>
<dbReference type="SMR" id="R4JJN6"/>
<dbReference type="GO" id="GO:0005576">
    <property type="term" value="C:extracellular region"/>
    <property type="evidence" value="ECO:0007669"/>
    <property type="project" value="UniProtKB-SubCell"/>
</dbReference>
<dbReference type="GO" id="GO:0016020">
    <property type="term" value="C:membrane"/>
    <property type="evidence" value="ECO:0007669"/>
    <property type="project" value="UniProtKB-KW"/>
</dbReference>
<dbReference type="GO" id="GO:0044218">
    <property type="term" value="C:other organism cell membrane"/>
    <property type="evidence" value="ECO:0007669"/>
    <property type="project" value="UniProtKB-KW"/>
</dbReference>
<dbReference type="GO" id="GO:0042742">
    <property type="term" value="P:defense response to bacterium"/>
    <property type="evidence" value="ECO:0007669"/>
    <property type="project" value="UniProtKB-KW"/>
</dbReference>
<dbReference type="GO" id="GO:0050832">
    <property type="term" value="P:defense response to fungus"/>
    <property type="evidence" value="ECO:0007669"/>
    <property type="project" value="UniProtKB-KW"/>
</dbReference>
<dbReference type="GO" id="GO:0031640">
    <property type="term" value="P:killing of cells of another organism"/>
    <property type="evidence" value="ECO:0007669"/>
    <property type="project" value="UniProtKB-KW"/>
</dbReference>
<comment type="function">
    <text evidence="3">Amphipathic peptide that possesses relatively strong activities against Gram-positive bacteria and a fungus, but has very weak antimicrobial activities against Gram-negative bacteria. Also exhibits mild hemolytic activities against human erythrocytes (16 uM induce 70% of hemolysis). Furthermore, this peptide potently inhibits the growth of vancomycin-resistant Enterococcus (VRE) S13, a pathogen that can cause a number of human infections. Minimal inhibitory concentration (MIC) are the following: 16 uM against S.aureus, 6 uM against B.magaterium, 8 uM against M.luteus, 4 uM against VRE, 12 uM against methicillin-resistant S.aureus, 36 uM against E.coli, &gt;87 uM against P.putida, 87 uM against K.oxytoca, &gt;87 uM against E.cloacae, 84 uM against S.enterica and 17 uM against the fungus C.tropicalis.</text>
</comment>
<comment type="subcellular location">
    <subcellularLocation>
        <location evidence="1">Secreted</location>
    </subcellularLocation>
    <subcellularLocation>
        <location evidence="1">Target cell membrane</location>
    </subcellularLocation>
    <text evidence="1">Forms an alpha-helical membrane channel in the prey.</text>
</comment>
<comment type="tissue specificity">
    <text evidence="6">Expressed by the venom gland.</text>
</comment>
<comment type="similarity">
    <text evidence="6">Belongs to the non-disulfide-bridged peptide (NDBP) superfamily. Short antimicrobial peptide (group 4) family.</text>
</comment>
<sequence>MKTQFAILLIALVLFQLLSQSDAFLSTIWNGIKSLLGRRGLNELDNLDELFDGEISQADIDFLKELMS</sequence>
<name>NDB4L_PANIM</name>
<evidence type="ECO:0000250" key="1"/>
<evidence type="ECO:0000255" key="2"/>
<evidence type="ECO:0000269" key="3">
    <source>
    </source>
</evidence>
<evidence type="ECO:0000303" key="4">
    <source>
    </source>
</evidence>
<evidence type="ECO:0000303" key="5">
    <source>
    </source>
</evidence>
<evidence type="ECO:0000305" key="6"/>
<protein>
    <recommendedName>
        <fullName>Pantinin-3</fullName>
    </recommendedName>
    <alternativeName>
        <fullName evidence="5">Non-disulfide-bridged peptide 4.22</fullName>
        <shortName evidence="5">NDBP-4.22</shortName>
    </alternativeName>
    <alternativeName>
        <fullName evidence="4">Non-disulfide-bridged peptide 5.23</fullName>
        <shortName evidence="4">NDBP-5.23</shortName>
    </alternativeName>
</protein>
<keyword id="KW-0027">Amidation</keyword>
<keyword id="KW-0044">Antibiotic</keyword>
<keyword id="KW-0929">Antimicrobial</keyword>
<keyword id="KW-0165">Cleavage on pair of basic residues</keyword>
<keyword id="KW-0204">Cytolysis</keyword>
<keyword id="KW-0295">Fungicide</keyword>
<keyword id="KW-0354">Hemolysis</keyword>
<keyword id="KW-0472">Membrane</keyword>
<keyword id="KW-0964">Secreted</keyword>
<keyword id="KW-0732">Signal</keyword>
<keyword id="KW-1052">Target cell membrane</keyword>
<keyword id="KW-1053">Target membrane</keyword>
<accession>R4JJN6</accession>
<feature type="signal peptide" evidence="2">
    <location>
        <begin position="1"/>
        <end position="23"/>
    </location>
</feature>
<feature type="peptide" id="PRO_0000432379" description="Pantinin-3">
    <location>
        <begin position="24"/>
        <end position="36"/>
    </location>
</feature>
<feature type="propeptide" id="PRO_0000432380" evidence="1">
    <location>
        <begin position="40"/>
        <end position="68"/>
    </location>
</feature>
<feature type="modified residue" description="Leucine amide" evidence="1">
    <location>
        <position position="36"/>
    </location>
</feature>
<organism>
    <name type="scientific">Pandinus imperator</name>
    <name type="common">Emperor scorpion</name>
    <dbReference type="NCBI Taxonomy" id="55084"/>
    <lineage>
        <taxon>Eukaryota</taxon>
        <taxon>Metazoa</taxon>
        <taxon>Ecdysozoa</taxon>
        <taxon>Arthropoda</taxon>
        <taxon>Chelicerata</taxon>
        <taxon>Arachnida</taxon>
        <taxon>Scorpiones</taxon>
        <taxon>Iurida</taxon>
        <taxon>Scorpionoidea</taxon>
        <taxon>Scorpionidae</taxon>
        <taxon>Pandininae</taxon>
        <taxon>Pandinus</taxon>
    </lineage>
</organism>
<reference key="1">
    <citation type="journal article" date="2013" name="Peptides">
        <title>Three new antimicrobial peptides from the scorpion Pandinus imperator.</title>
        <authorList>
            <person name="Zeng X.C."/>
            <person name="Zhou L."/>
            <person name="Shi W."/>
            <person name="Luo X."/>
            <person name="Zhang L."/>
            <person name="Nie Y."/>
            <person name="Wang J."/>
            <person name="Wu S."/>
            <person name="Cao B."/>
            <person name="Cao H."/>
        </authorList>
    </citation>
    <scope>NUCLEOTIDE SEQUENCE [MRNA]</scope>
    <scope>SYNTHESIS OF 24-36</scope>
    <scope>FUNCTION</scope>
    <scope>NOMENCLATURE</scope>
    <source>
        <tissue>Venom gland</tissue>
    </source>
</reference>
<reference key="2">
    <citation type="journal article" date="2014" name="Peptides">
        <title>Scorpion venom peptides with no disulfide bridges: a review.</title>
        <authorList>
            <person name="Almaaytah A."/>
            <person name="Albalas Q."/>
        </authorList>
    </citation>
    <scope>NOMENCLATURE</scope>
</reference>